<name>FLGI_CAMJR</name>
<sequence length="348" mass="36981">MRVLTIFLLFMTSIFAVQIKDVANTVGVRDNQLIGYGLVVGLNGSGDGTSSKFTLQSISNLLQGMNIKVDPNDIKSKNTAAVMVTAKLPAFAKSGDKLDITVSSMGDAKSLQGGTLLLTALRGIDGEIYAIAQGSISTGGLTPRPGGAGSHSTAATVMGGANVEREIPQNFSQNNDLTLSLKVADFKTANDIERVLNTVFGEEVAKAIDSRTVKLKKPEDLSNVDFMARVLEQDIAYKPQSKVIIDERTGTVIAGVDVEVEPVLITHKDITIKIDPNNNAVANQNEIDMKDGGFVDPSSNTLRINNAKSTVANIARMLNKLGATPNDIIAIMENLKRAGAINADLEII</sequence>
<proteinExistence type="inferred from homology"/>
<reference key="1">
    <citation type="journal article" date="2005" name="PLoS Biol.">
        <title>Major structural differences and novel potential virulence mechanisms from the genomes of multiple Campylobacter species.</title>
        <authorList>
            <person name="Fouts D.E."/>
            <person name="Mongodin E.F."/>
            <person name="Mandrell R.E."/>
            <person name="Miller W.G."/>
            <person name="Rasko D.A."/>
            <person name="Ravel J."/>
            <person name="Brinkac L.M."/>
            <person name="DeBoy R.T."/>
            <person name="Parker C.T."/>
            <person name="Daugherty S.C."/>
            <person name="Dodson R.J."/>
            <person name="Durkin A.S."/>
            <person name="Madupu R."/>
            <person name="Sullivan S.A."/>
            <person name="Shetty J.U."/>
            <person name="Ayodeji M.A."/>
            <person name="Shvartsbeyn A."/>
            <person name="Schatz M.C."/>
            <person name="Badger J.H."/>
            <person name="Fraser C.M."/>
            <person name="Nelson K.E."/>
        </authorList>
    </citation>
    <scope>NUCLEOTIDE SEQUENCE [LARGE SCALE GENOMIC DNA]</scope>
    <source>
        <strain>RM1221</strain>
    </source>
</reference>
<comment type="function">
    <text evidence="1">Assembles around the rod to form the L-ring and probably protects the motor/basal body from shearing forces during rotation.</text>
</comment>
<comment type="subunit">
    <text evidence="1">The basal body constitutes a major portion of the flagellar organelle and consists of four rings (L,P,S, and M) mounted on a central rod.</text>
</comment>
<comment type="subcellular location">
    <subcellularLocation>
        <location evidence="1">Periplasm</location>
    </subcellularLocation>
    <subcellularLocation>
        <location evidence="1">Bacterial flagellum basal body</location>
    </subcellularLocation>
</comment>
<comment type="similarity">
    <text evidence="1">Belongs to the FlgI family.</text>
</comment>
<evidence type="ECO:0000255" key="1">
    <source>
        <dbReference type="HAMAP-Rule" id="MF_00416"/>
    </source>
</evidence>
<protein>
    <recommendedName>
        <fullName evidence="1">Flagellar P-ring protein</fullName>
    </recommendedName>
    <alternativeName>
        <fullName evidence="1">Basal body P-ring protein</fullName>
    </alternativeName>
</protein>
<gene>
    <name evidence="1" type="primary">flgI</name>
    <name type="ordered locus">CJE1636</name>
</gene>
<feature type="signal peptide" evidence="1">
    <location>
        <begin position="1"/>
        <end position="16"/>
    </location>
</feature>
<feature type="chain" id="PRO_0000041791" description="Flagellar P-ring protein">
    <location>
        <begin position="17"/>
        <end position="348"/>
    </location>
</feature>
<dbReference type="EMBL" id="CP000025">
    <property type="protein sequence ID" value="AAW36069.1"/>
    <property type="molecule type" value="Genomic_DNA"/>
</dbReference>
<dbReference type="RefSeq" id="WP_002826014.1">
    <property type="nucleotide sequence ID" value="NC_003912.7"/>
</dbReference>
<dbReference type="SMR" id="Q5HSW8"/>
<dbReference type="KEGG" id="cjr:CJE1636"/>
<dbReference type="HOGENOM" id="CLU_045235_1_0_7"/>
<dbReference type="GO" id="GO:0009428">
    <property type="term" value="C:bacterial-type flagellum basal body, distal rod, P ring"/>
    <property type="evidence" value="ECO:0007669"/>
    <property type="project" value="InterPro"/>
</dbReference>
<dbReference type="GO" id="GO:0030288">
    <property type="term" value="C:outer membrane-bounded periplasmic space"/>
    <property type="evidence" value="ECO:0007669"/>
    <property type="project" value="InterPro"/>
</dbReference>
<dbReference type="GO" id="GO:0005198">
    <property type="term" value="F:structural molecule activity"/>
    <property type="evidence" value="ECO:0007669"/>
    <property type="project" value="InterPro"/>
</dbReference>
<dbReference type="GO" id="GO:0071973">
    <property type="term" value="P:bacterial-type flagellum-dependent cell motility"/>
    <property type="evidence" value="ECO:0007669"/>
    <property type="project" value="InterPro"/>
</dbReference>
<dbReference type="HAMAP" id="MF_00416">
    <property type="entry name" value="FlgI"/>
    <property type="match status" value="1"/>
</dbReference>
<dbReference type="InterPro" id="IPR001782">
    <property type="entry name" value="Flag_FlgI"/>
</dbReference>
<dbReference type="NCBIfam" id="NF003676">
    <property type="entry name" value="PRK05303.1"/>
    <property type="match status" value="1"/>
</dbReference>
<dbReference type="PANTHER" id="PTHR30381">
    <property type="entry name" value="FLAGELLAR P-RING PERIPLASMIC PROTEIN FLGI"/>
    <property type="match status" value="1"/>
</dbReference>
<dbReference type="PANTHER" id="PTHR30381:SF0">
    <property type="entry name" value="FLAGELLAR P-RING PROTEIN"/>
    <property type="match status" value="1"/>
</dbReference>
<dbReference type="Pfam" id="PF02119">
    <property type="entry name" value="FlgI"/>
    <property type="match status" value="1"/>
</dbReference>
<dbReference type="PRINTS" id="PR01010">
    <property type="entry name" value="FLGPRINGFLGI"/>
</dbReference>
<accession>Q5HSW8</accession>
<keyword id="KW-0975">Bacterial flagellum</keyword>
<keyword id="KW-0574">Periplasm</keyword>
<keyword id="KW-0732">Signal</keyword>
<organism>
    <name type="scientific">Campylobacter jejuni (strain RM1221)</name>
    <dbReference type="NCBI Taxonomy" id="195099"/>
    <lineage>
        <taxon>Bacteria</taxon>
        <taxon>Pseudomonadati</taxon>
        <taxon>Campylobacterota</taxon>
        <taxon>Epsilonproteobacteria</taxon>
        <taxon>Campylobacterales</taxon>
        <taxon>Campylobacteraceae</taxon>
        <taxon>Campylobacter</taxon>
    </lineage>
</organism>